<sequence>MNFHEYQAKQLFAEYGIPVPAGRIASSADEAVTAAKSLGNGPWMVKAQIHAGGRGKAGGVKFCKTTDEVKQAAATMLGTKMATYQSAGVALPVNLVLVTEAGEITKELYLSVLVDRGTRSITYIASSEGGVDIEHVAAETPEKIQTLNVDFVEGLQPYQGRDIGFHLGLEAKQVNQLSKIMISLYQLFNDKDLSLIELNPLAILSNGDLYALDGKINSDDNATFRHKELAAMRDKTQEDETEVLASENDLNYVTMDGNIGCMVNGAGLAMATMDVIKLNGGEPANFLDVGGGATKERVTTAFKLILSSNKVKAIFVNIFGGIVRCDMIAEGIIAAVKEVGVKVPVIVRLEGTNVDAGKQLLATSGLAIIPADDINDGAKKAVAAVTV</sequence>
<proteinExistence type="inferred from homology"/>
<protein>
    <recommendedName>
        <fullName evidence="1">Succinate--CoA ligase [ADP-forming] subunit beta</fullName>
        <ecNumber evidence="1">6.2.1.5</ecNumber>
    </recommendedName>
    <alternativeName>
        <fullName evidence="1">Succinyl-CoA synthetase subunit beta</fullName>
        <shortName evidence="1">SCS-beta</shortName>
    </alternativeName>
</protein>
<reference key="1">
    <citation type="journal article" date="2003" name="J. Bacteriol.">
        <title>Comparative analyses of the complete genome sequences of Pierce's disease and citrus variegated chlorosis strains of Xylella fastidiosa.</title>
        <authorList>
            <person name="Van Sluys M.A."/>
            <person name="de Oliveira M.C."/>
            <person name="Monteiro-Vitorello C.B."/>
            <person name="Miyaki C.Y."/>
            <person name="Furlan L.R."/>
            <person name="Camargo L.E.A."/>
            <person name="da Silva A.C.R."/>
            <person name="Moon D.H."/>
            <person name="Takita M.A."/>
            <person name="Lemos E.G.M."/>
            <person name="Machado M.A."/>
            <person name="Ferro M.I.T."/>
            <person name="da Silva F.R."/>
            <person name="Goldman M.H.S."/>
            <person name="Goldman G.H."/>
            <person name="Lemos M.V.F."/>
            <person name="El-Dorry H."/>
            <person name="Tsai S.M."/>
            <person name="Carrer H."/>
            <person name="Carraro D.M."/>
            <person name="de Oliveira R.C."/>
            <person name="Nunes L.R."/>
            <person name="Siqueira W.J."/>
            <person name="Coutinho L.L."/>
            <person name="Kimura E.T."/>
            <person name="Ferro E.S."/>
            <person name="Harakava R."/>
            <person name="Kuramae E.E."/>
            <person name="Marino C.L."/>
            <person name="Giglioti E."/>
            <person name="Abreu I.L."/>
            <person name="Alves L.M.C."/>
            <person name="do Amaral A.M."/>
            <person name="Baia G.S."/>
            <person name="Blanco S.R."/>
            <person name="Brito M.S."/>
            <person name="Cannavan F.S."/>
            <person name="Celestino A.V."/>
            <person name="da Cunha A.F."/>
            <person name="Fenille R.C."/>
            <person name="Ferro J.A."/>
            <person name="Formighieri E.F."/>
            <person name="Kishi L.T."/>
            <person name="Leoni S.G."/>
            <person name="Oliveira A.R."/>
            <person name="Rosa V.E. Jr."/>
            <person name="Sassaki F.T."/>
            <person name="Sena J.A.D."/>
            <person name="de Souza A.A."/>
            <person name="Truffi D."/>
            <person name="Tsukumo F."/>
            <person name="Yanai G.M."/>
            <person name="Zaros L.G."/>
            <person name="Civerolo E.L."/>
            <person name="Simpson A.J.G."/>
            <person name="Almeida N.F. Jr."/>
            <person name="Setubal J.C."/>
            <person name="Kitajima J.P."/>
        </authorList>
    </citation>
    <scope>NUCLEOTIDE SEQUENCE [LARGE SCALE GENOMIC DNA]</scope>
    <source>
        <strain>Temecula1 / ATCC 700964</strain>
    </source>
</reference>
<feature type="chain" id="PRO_0000102879" description="Succinate--CoA ligase [ADP-forming] subunit beta">
    <location>
        <begin position="1"/>
        <end position="387"/>
    </location>
</feature>
<feature type="domain" description="ATP-grasp" evidence="1">
    <location>
        <begin position="9"/>
        <end position="244"/>
    </location>
</feature>
<feature type="binding site" evidence="1">
    <location>
        <position position="46"/>
    </location>
    <ligand>
        <name>ATP</name>
        <dbReference type="ChEBI" id="CHEBI:30616"/>
    </ligand>
</feature>
<feature type="binding site" evidence="1">
    <location>
        <begin position="53"/>
        <end position="55"/>
    </location>
    <ligand>
        <name>ATP</name>
        <dbReference type="ChEBI" id="CHEBI:30616"/>
    </ligand>
</feature>
<feature type="binding site" evidence="1">
    <location>
        <position position="102"/>
    </location>
    <ligand>
        <name>ATP</name>
        <dbReference type="ChEBI" id="CHEBI:30616"/>
    </ligand>
</feature>
<feature type="binding site" evidence="1">
    <location>
        <position position="107"/>
    </location>
    <ligand>
        <name>ATP</name>
        <dbReference type="ChEBI" id="CHEBI:30616"/>
    </ligand>
</feature>
<feature type="binding site" evidence="1">
    <location>
        <position position="199"/>
    </location>
    <ligand>
        <name>Mg(2+)</name>
        <dbReference type="ChEBI" id="CHEBI:18420"/>
    </ligand>
</feature>
<feature type="binding site" evidence="1">
    <location>
        <position position="213"/>
    </location>
    <ligand>
        <name>Mg(2+)</name>
        <dbReference type="ChEBI" id="CHEBI:18420"/>
    </ligand>
</feature>
<feature type="binding site" evidence="1">
    <location>
        <position position="264"/>
    </location>
    <ligand>
        <name>substrate</name>
        <note>ligand shared with subunit alpha</note>
    </ligand>
</feature>
<feature type="binding site" evidence="1">
    <location>
        <begin position="321"/>
        <end position="323"/>
    </location>
    <ligand>
        <name>substrate</name>
        <note>ligand shared with subunit alpha</note>
    </ligand>
</feature>
<accession>Q87A98</accession>
<keyword id="KW-0067">ATP-binding</keyword>
<keyword id="KW-0436">Ligase</keyword>
<keyword id="KW-0460">Magnesium</keyword>
<keyword id="KW-0479">Metal-binding</keyword>
<keyword id="KW-0547">Nucleotide-binding</keyword>
<keyword id="KW-1185">Reference proteome</keyword>
<keyword id="KW-0816">Tricarboxylic acid cycle</keyword>
<gene>
    <name evidence="1" type="primary">sucC</name>
    <name type="ordered locus">PD_1930</name>
</gene>
<name>SUCC_XYLFT</name>
<evidence type="ECO:0000255" key="1">
    <source>
        <dbReference type="HAMAP-Rule" id="MF_00558"/>
    </source>
</evidence>
<comment type="function">
    <text evidence="1">Succinyl-CoA synthetase functions in the citric acid cycle (TCA), coupling the hydrolysis of succinyl-CoA to the synthesis of either ATP or GTP and thus represents the only step of substrate-level phosphorylation in the TCA. The beta subunit provides nucleotide specificity of the enzyme and binds the substrate succinate, while the binding sites for coenzyme A and phosphate are found in the alpha subunit.</text>
</comment>
<comment type="catalytic activity">
    <reaction evidence="1">
        <text>succinate + ATP + CoA = succinyl-CoA + ADP + phosphate</text>
        <dbReference type="Rhea" id="RHEA:17661"/>
        <dbReference type="ChEBI" id="CHEBI:30031"/>
        <dbReference type="ChEBI" id="CHEBI:30616"/>
        <dbReference type="ChEBI" id="CHEBI:43474"/>
        <dbReference type="ChEBI" id="CHEBI:57287"/>
        <dbReference type="ChEBI" id="CHEBI:57292"/>
        <dbReference type="ChEBI" id="CHEBI:456216"/>
        <dbReference type="EC" id="6.2.1.5"/>
    </reaction>
    <physiologicalReaction direction="right-to-left" evidence="1">
        <dbReference type="Rhea" id="RHEA:17663"/>
    </physiologicalReaction>
</comment>
<comment type="catalytic activity">
    <reaction evidence="1">
        <text>GTP + succinate + CoA = succinyl-CoA + GDP + phosphate</text>
        <dbReference type="Rhea" id="RHEA:22120"/>
        <dbReference type="ChEBI" id="CHEBI:30031"/>
        <dbReference type="ChEBI" id="CHEBI:37565"/>
        <dbReference type="ChEBI" id="CHEBI:43474"/>
        <dbReference type="ChEBI" id="CHEBI:57287"/>
        <dbReference type="ChEBI" id="CHEBI:57292"/>
        <dbReference type="ChEBI" id="CHEBI:58189"/>
    </reaction>
    <physiologicalReaction direction="right-to-left" evidence="1">
        <dbReference type="Rhea" id="RHEA:22122"/>
    </physiologicalReaction>
</comment>
<comment type="cofactor">
    <cofactor evidence="1">
        <name>Mg(2+)</name>
        <dbReference type="ChEBI" id="CHEBI:18420"/>
    </cofactor>
    <text evidence="1">Binds 1 Mg(2+) ion per subunit.</text>
</comment>
<comment type="pathway">
    <text evidence="1">Carbohydrate metabolism; tricarboxylic acid cycle; succinate from succinyl-CoA (ligase route): step 1/1.</text>
</comment>
<comment type="subunit">
    <text evidence="1">Heterotetramer of two alpha and two beta subunits.</text>
</comment>
<comment type="similarity">
    <text evidence="1">Belongs to the succinate/malate CoA ligase beta subunit family.</text>
</comment>
<organism>
    <name type="scientific">Xylella fastidiosa (strain Temecula1 / ATCC 700964)</name>
    <dbReference type="NCBI Taxonomy" id="183190"/>
    <lineage>
        <taxon>Bacteria</taxon>
        <taxon>Pseudomonadati</taxon>
        <taxon>Pseudomonadota</taxon>
        <taxon>Gammaproteobacteria</taxon>
        <taxon>Lysobacterales</taxon>
        <taxon>Lysobacteraceae</taxon>
        <taxon>Xylella</taxon>
    </lineage>
</organism>
<dbReference type="EC" id="6.2.1.5" evidence="1"/>
<dbReference type="EMBL" id="AE009442">
    <property type="protein sequence ID" value="AAO29760.1"/>
    <property type="molecule type" value="Genomic_DNA"/>
</dbReference>
<dbReference type="RefSeq" id="WP_004090371.1">
    <property type="nucleotide sequence ID" value="NC_004556.1"/>
</dbReference>
<dbReference type="SMR" id="Q87A98"/>
<dbReference type="KEGG" id="xft:PD_1930"/>
<dbReference type="HOGENOM" id="CLU_037430_0_2_6"/>
<dbReference type="UniPathway" id="UPA00223">
    <property type="reaction ID" value="UER00999"/>
</dbReference>
<dbReference type="Proteomes" id="UP000002516">
    <property type="component" value="Chromosome"/>
</dbReference>
<dbReference type="GO" id="GO:0042709">
    <property type="term" value="C:succinate-CoA ligase complex"/>
    <property type="evidence" value="ECO:0007669"/>
    <property type="project" value="TreeGrafter"/>
</dbReference>
<dbReference type="GO" id="GO:0005524">
    <property type="term" value="F:ATP binding"/>
    <property type="evidence" value="ECO:0007669"/>
    <property type="project" value="UniProtKB-UniRule"/>
</dbReference>
<dbReference type="GO" id="GO:0000287">
    <property type="term" value="F:magnesium ion binding"/>
    <property type="evidence" value="ECO:0007669"/>
    <property type="project" value="UniProtKB-UniRule"/>
</dbReference>
<dbReference type="GO" id="GO:0004775">
    <property type="term" value="F:succinate-CoA ligase (ADP-forming) activity"/>
    <property type="evidence" value="ECO:0007669"/>
    <property type="project" value="UniProtKB-UniRule"/>
</dbReference>
<dbReference type="GO" id="GO:0004776">
    <property type="term" value="F:succinate-CoA ligase (GDP-forming) activity"/>
    <property type="evidence" value="ECO:0007669"/>
    <property type="project" value="RHEA"/>
</dbReference>
<dbReference type="GO" id="GO:0006104">
    <property type="term" value="P:succinyl-CoA metabolic process"/>
    <property type="evidence" value="ECO:0007669"/>
    <property type="project" value="TreeGrafter"/>
</dbReference>
<dbReference type="GO" id="GO:0006099">
    <property type="term" value="P:tricarboxylic acid cycle"/>
    <property type="evidence" value="ECO:0007669"/>
    <property type="project" value="UniProtKB-UniRule"/>
</dbReference>
<dbReference type="FunFam" id="3.30.1490.20:FF:000002">
    <property type="entry name" value="Succinate--CoA ligase [ADP-forming] subunit beta"/>
    <property type="match status" value="1"/>
</dbReference>
<dbReference type="FunFam" id="3.30.470.20:FF:000002">
    <property type="entry name" value="Succinate--CoA ligase [ADP-forming] subunit beta"/>
    <property type="match status" value="1"/>
</dbReference>
<dbReference type="FunFam" id="3.40.50.261:FF:000001">
    <property type="entry name" value="Succinate--CoA ligase [ADP-forming] subunit beta"/>
    <property type="match status" value="1"/>
</dbReference>
<dbReference type="Gene3D" id="3.30.1490.20">
    <property type="entry name" value="ATP-grasp fold, A domain"/>
    <property type="match status" value="1"/>
</dbReference>
<dbReference type="Gene3D" id="3.30.470.20">
    <property type="entry name" value="ATP-grasp fold, B domain"/>
    <property type="match status" value="1"/>
</dbReference>
<dbReference type="Gene3D" id="3.40.50.261">
    <property type="entry name" value="Succinyl-CoA synthetase domains"/>
    <property type="match status" value="1"/>
</dbReference>
<dbReference type="HAMAP" id="MF_00558">
    <property type="entry name" value="Succ_CoA_beta"/>
    <property type="match status" value="1"/>
</dbReference>
<dbReference type="InterPro" id="IPR011761">
    <property type="entry name" value="ATP-grasp"/>
</dbReference>
<dbReference type="InterPro" id="IPR013650">
    <property type="entry name" value="ATP-grasp_succ-CoA_synth-type"/>
</dbReference>
<dbReference type="InterPro" id="IPR013815">
    <property type="entry name" value="ATP_grasp_subdomain_1"/>
</dbReference>
<dbReference type="InterPro" id="IPR017866">
    <property type="entry name" value="Succ-CoA_synthase_bsu_CS"/>
</dbReference>
<dbReference type="InterPro" id="IPR005811">
    <property type="entry name" value="SUCC_ACL_C"/>
</dbReference>
<dbReference type="InterPro" id="IPR005809">
    <property type="entry name" value="Succ_CoA_ligase-like_bsu"/>
</dbReference>
<dbReference type="InterPro" id="IPR016102">
    <property type="entry name" value="Succinyl-CoA_synth-like"/>
</dbReference>
<dbReference type="NCBIfam" id="NF001913">
    <property type="entry name" value="PRK00696.1"/>
    <property type="match status" value="1"/>
</dbReference>
<dbReference type="NCBIfam" id="TIGR01016">
    <property type="entry name" value="sucCoAbeta"/>
    <property type="match status" value="1"/>
</dbReference>
<dbReference type="PANTHER" id="PTHR11815:SF10">
    <property type="entry name" value="SUCCINATE--COA LIGASE [GDP-FORMING] SUBUNIT BETA, MITOCHONDRIAL"/>
    <property type="match status" value="1"/>
</dbReference>
<dbReference type="PANTHER" id="PTHR11815">
    <property type="entry name" value="SUCCINYL-COA SYNTHETASE BETA CHAIN"/>
    <property type="match status" value="1"/>
</dbReference>
<dbReference type="Pfam" id="PF08442">
    <property type="entry name" value="ATP-grasp_2"/>
    <property type="match status" value="1"/>
</dbReference>
<dbReference type="Pfam" id="PF00549">
    <property type="entry name" value="Ligase_CoA"/>
    <property type="match status" value="1"/>
</dbReference>
<dbReference type="PIRSF" id="PIRSF001554">
    <property type="entry name" value="SucCS_beta"/>
    <property type="match status" value="1"/>
</dbReference>
<dbReference type="SUPFAM" id="SSF56059">
    <property type="entry name" value="Glutathione synthetase ATP-binding domain-like"/>
    <property type="match status" value="1"/>
</dbReference>
<dbReference type="SUPFAM" id="SSF52210">
    <property type="entry name" value="Succinyl-CoA synthetase domains"/>
    <property type="match status" value="1"/>
</dbReference>
<dbReference type="PROSITE" id="PS50975">
    <property type="entry name" value="ATP_GRASP"/>
    <property type="match status" value="1"/>
</dbReference>
<dbReference type="PROSITE" id="PS01217">
    <property type="entry name" value="SUCCINYL_COA_LIG_3"/>
    <property type="match status" value="1"/>
</dbReference>